<protein>
    <recommendedName>
        <fullName evidence="1">Transcriptional repressor NrdR</fullName>
    </recommendedName>
</protein>
<gene>
    <name evidence="1" type="primary">nrdR</name>
    <name type="ordered locus">NTHI1114</name>
</gene>
<proteinExistence type="inferred from homology"/>
<keyword id="KW-0067">ATP-binding</keyword>
<keyword id="KW-0238">DNA-binding</keyword>
<keyword id="KW-0479">Metal-binding</keyword>
<keyword id="KW-0547">Nucleotide-binding</keyword>
<keyword id="KW-0678">Repressor</keyword>
<keyword id="KW-0804">Transcription</keyword>
<keyword id="KW-0805">Transcription regulation</keyword>
<keyword id="KW-0862">Zinc</keyword>
<keyword id="KW-0863">Zinc-finger</keyword>
<evidence type="ECO:0000255" key="1">
    <source>
        <dbReference type="HAMAP-Rule" id="MF_00440"/>
    </source>
</evidence>
<dbReference type="EMBL" id="CP000057">
    <property type="protein sequence ID" value="AAX87982.1"/>
    <property type="molecule type" value="Genomic_DNA"/>
</dbReference>
<dbReference type="RefSeq" id="WP_005648026.1">
    <property type="nucleotide sequence ID" value="NC_007146.2"/>
</dbReference>
<dbReference type="SMR" id="Q4QLW5"/>
<dbReference type="GeneID" id="93219981"/>
<dbReference type="KEGG" id="hit:NTHI1114"/>
<dbReference type="HOGENOM" id="CLU_108412_0_0_6"/>
<dbReference type="Proteomes" id="UP000002525">
    <property type="component" value="Chromosome"/>
</dbReference>
<dbReference type="GO" id="GO:0005524">
    <property type="term" value="F:ATP binding"/>
    <property type="evidence" value="ECO:0007669"/>
    <property type="project" value="UniProtKB-KW"/>
</dbReference>
<dbReference type="GO" id="GO:0003677">
    <property type="term" value="F:DNA binding"/>
    <property type="evidence" value="ECO:0007669"/>
    <property type="project" value="UniProtKB-KW"/>
</dbReference>
<dbReference type="GO" id="GO:0008270">
    <property type="term" value="F:zinc ion binding"/>
    <property type="evidence" value="ECO:0007669"/>
    <property type="project" value="UniProtKB-UniRule"/>
</dbReference>
<dbReference type="GO" id="GO:0045892">
    <property type="term" value="P:negative regulation of DNA-templated transcription"/>
    <property type="evidence" value="ECO:0007669"/>
    <property type="project" value="UniProtKB-UniRule"/>
</dbReference>
<dbReference type="HAMAP" id="MF_00440">
    <property type="entry name" value="NrdR"/>
    <property type="match status" value="1"/>
</dbReference>
<dbReference type="InterPro" id="IPR005144">
    <property type="entry name" value="ATP-cone_dom"/>
</dbReference>
<dbReference type="InterPro" id="IPR055173">
    <property type="entry name" value="NrdR-like_N"/>
</dbReference>
<dbReference type="InterPro" id="IPR003796">
    <property type="entry name" value="RNR_NrdR-like"/>
</dbReference>
<dbReference type="NCBIfam" id="TIGR00244">
    <property type="entry name" value="transcriptional regulator NrdR"/>
    <property type="match status" value="1"/>
</dbReference>
<dbReference type="PANTHER" id="PTHR30455">
    <property type="entry name" value="TRANSCRIPTIONAL REPRESSOR NRDR"/>
    <property type="match status" value="1"/>
</dbReference>
<dbReference type="PANTHER" id="PTHR30455:SF2">
    <property type="entry name" value="TRANSCRIPTIONAL REPRESSOR NRDR"/>
    <property type="match status" value="1"/>
</dbReference>
<dbReference type="Pfam" id="PF03477">
    <property type="entry name" value="ATP-cone"/>
    <property type="match status" value="1"/>
</dbReference>
<dbReference type="Pfam" id="PF22811">
    <property type="entry name" value="Zn_ribbon_NrdR"/>
    <property type="match status" value="1"/>
</dbReference>
<dbReference type="PROSITE" id="PS51161">
    <property type="entry name" value="ATP_CONE"/>
    <property type="match status" value="1"/>
</dbReference>
<sequence length="149" mass="17279">MHCPFCDTEETKVIDSRLVSDGYQVRRRRECGHCHERFTTFEMAELIIPKIIKTDGTREPFNEDKLRSGIQHALEKRPVSADDVEKAINHIILQLRATGEREVPSKLVGKLAMNELKKLDKVAYIRFASVYLSFDDIDQFTIEIEKLKD</sequence>
<reference key="1">
    <citation type="journal article" date="2005" name="J. Bacteriol.">
        <title>Genomic sequence of an otitis media isolate of nontypeable Haemophilus influenzae: comparative study with H. influenzae serotype d, strain KW20.</title>
        <authorList>
            <person name="Harrison A."/>
            <person name="Dyer D.W."/>
            <person name="Gillaspy A."/>
            <person name="Ray W.C."/>
            <person name="Mungur R."/>
            <person name="Carson M.B."/>
            <person name="Zhong H."/>
            <person name="Gipson J."/>
            <person name="Gipson M."/>
            <person name="Johnson L.S."/>
            <person name="Lewis L."/>
            <person name="Bakaletz L.O."/>
            <person name="Munson R.S. Jr."/>
        </authorList>
    </citation>
    <scope>NUCLEOTIDE SEQUENCE [LARGE SCALE GENOMIC DNA]</scope>
    <source>
        <strain>86-028NP</strain>
    </source>
</reference>
<accession>Q4QLW5</accession>
<organism>
    <name type="scientific">Haemophilus influenzae (strain 86-028NP)</name>
    <dbReference type="NCBI Taxonomy" id="281310"/>
    <lineage>
        <taxon>Bacteria</taxon>
        <taxon>Pseudomonadati</taxon>
        <taxon>Pseudomonadota</taxon>
        <taxon>Gammaproteobacteria</taxon>
        <taxon>Pasteurellales</taxon>
        <taxon>Pasteurellaceae</taxon>
        <taxon>Haemophilus</taxon>
    </lineage>
</organism>
<name>NRDR_HAEI8</name>
<comment type="function">
    <text evidence="1">Negatively regulates transcription of bacterial ribonucleotide reductase nrd genes and operons by binding to NrdR-boxes.</text>
</comment>
<comment type="cofactor">
    <cofactor evidence="1">
        <name>Zn(2+)</name>
        <dbReference type="ChEBI" id="CHEBI:29105"/>
    </cofactor>
    <text evidence="1">Binds 1 zinc ion.</text>
</comment>
<comment type="similarity">
    <text evidence="1">Belongs to the NrdR family.</text>
</comment>
<feature type="chain" id="PRO_0000230872" description="Transcriptional repressor NrdR">
    <location>
        <begin position="1"/>
        <end position="149"/>
    </location>
</feature>
<feature type="domain" description="ATP-cone" evidence="1">
    <location>
        <begin position="49"/>
        <end position="139"/>
    </location>
</feature>
<feature type="zinc finger region" evidence="1">
    <location>
        <begin position="3"/>
        <end position="34"/>
    </location>
</feature>